<gene>
    <name type="primary">MPI</name>
</gene>
<sequence>MAAPRVFPLSCAVQQYAWGKMGSNSEVARLLASSDPLAQIAEDKPYAELWMGTHPRGDAKILDNRISQKTLSQWIAENQDSLGSKVKDTFNGNLPFLFKVLSVETPLSIQAHPNKELAEKLHLQAPQHYPDANHKPEMAIALTPFQGLCGFRPVEEIVTFLKKVPEFQFLIGDEAATHLKQTMSHDSQAVASSLQSCFSHLMKSEKKVVVEQLNLLVKRISQQAAAGNNMEDIFGELLLQLHQQYPGDIGCFAIYFLNLLTLKPGEAMFLEANVPHAYLKGDCVECMACSDNTVRAGLTPKFIDVPTLCEMLSYTPSSSKDRLFLPTRSREDPYLSIYDPPVPDFTIMKTEVPGSVTGYKVLALDSASILLMVQGTVIASTPTTQTPIPLQRGGVLFIGANESVSLKLTEPKDLLIFRACCLL</sequence>
<proteinExistence type="evidence at transcript level"/>
<accession>A5A6K3</accession>
<feature type="initiator methionine" description="Removed" evidence="3">
    <location>
        <position position="1"/>
    </location>
</feature>
<feature type="chain" id="PRO_0000296675" description="Mannose-6-phosphate isomerase">
    <location>
        <begin position="2"/>
        <end position="423"/>
    </location>
</feature>
<feature type="active site" evidence="1">
    <location>
        <position position="295"/>
    </location>
</feature>
<feature type="binding site" evidence="1">
    <location>
        <position position="110"/>
    </location>
    <ligand>
        <name>Zn(2+)</name>
        <dbReference type="ChEBI" id="CHEBI:29105"/>
    </ligand>
</feature>
<feature type="binding site" evidence="1">
    <location>
        <position position="112"/>
    </location>
    <ligand>
        <name>Zn(2+)</name>
        <dbReference type="ChEBI" id="CHEBI:29105"/>
    </ligand>
</feature>
<feature type="binding site" evidence="1">
    <location>
        <position position="137"/>
    </location>
    <ligand>
        <name>Zn(2+)</name>
        <dbReference type="ChEBI" id="CHEBI:29105"/>
    </ligand>
</feature>
<feature type="binding site" evidence="1">
    <location>
        <position position="276"/>
    </location>
    <ligand>
        <name>Zn(2+)</name>
        <dbReference type="ChEBI" id="CHEBI:29105"/>
    </ligand>
</feature>
<feature type="modified residue" description="N-acetylalanine" evidence="3">
    <location>
        <position position="2"/>
    </location>
</feature>
<feature type="modified residue" description="Phosphoserine" evidence="3">
    <location>
        <position position="102"/>
    </location>
</feature>
<feature type="modified residue" description="Phosphoserine" evidence="3">
    <location>
        <position position="108"/>
    </location>
</feature>
<organism>
    <name type="scientific">Pan troglodytes</name>
    <name type="common">Chimpanzee</name>
    <dbReference type="NCBI Taxonomy" id="9598"/>
    <lineage>
        <taxon>Eukaryota</taxon>
        <taxon>Metazoa</taxon>
        <taxon>Chordata</taxon>
        <taxon>Craniata</taxon>
        <taxon>Vertebrata</taxon>
        <taxon>Euteleostomi</taxon>
        <taxon>Mammalia</taxon>
        <taxon>Eutheria</taxon>
        <taxon>Euarchontoglires</taxon>
        <taxon>Primates</taxon>
        <taxon>Haplorrhini</taxon>
        <taxon>Catarrhini</taxon>
        <taxon>Hominidae</taxon>
        <taxon>Pan</taxon>
    </lineage>
</organism>
<reference key="1">
    <citation type="journal article" date="2007" name="Gene">
        <title>Mapping of chimpanzee full-length cDNAs onto the human genome unveils large potential divergence of the transcriptome.</title>
        <authorList>
            <person name="Sakate R."/>
            <person name="Suto Y."/>
            <person name="Imanishi T."/>
            <person name="Tanoue T."/>
            <person name="Hida M."/>
            <person name="Hayasaka I."/>
            <person name="Kusuda J."/>
            <person name="Gojobori T."/>
            <person name="Hashimoto K."/>
            <person name="Hirai M."/>
        </authorList>
    </citation>
    <scope>NUCLEOTIDE SEQUENCE [MRNA]</scope>
    <source>
        <tissue>Brain</tissue>
    </source>
</reference>
<keyword id="KW-0007">Acetylation</keyword>
<keyword id="KW-0963">Cytoplasm</keyword>
<keyword id="KW-0413">Isomerase</keyword>
<keyword id="KW-0479">Metal-binding</keyword>
<keyword id="KW-0597">Phosphoprotein</keyword>
<keyword id="KW-1185">Reference proteome</keyword>
<keyword id="KW-0862">Zinc</keyword>
<protein>
    <recommendedName>
        <fullName>Mannose-6-phosphate isomerase</fullName>
        <ecNumber evidence="3">5.3.1.8</ecNumber>
    </recommendedName>
    <alternativeName>
        <fullName>Phosphohexomutase</fullName>
    </alternativeName>
    <alternativeName>
        <fullName evidence="3">Phosphomannose isomerase</fullName>
        <shortName evidence="3">PMI</shortName>
    </alternativeName>
</protein>
<dbReference type="EC" id="5.3.1.8" evidence="3"/>
<dbReference type="EMBL" id="AB222131">
    <property type="protein sequence ID" value="BAF62376.1"/>
    <property type="molecule type" value="mRNA"/>
</dbReference>
<dbReference type="RefSeq" id="NP_001092020.1">
    <property type="nucleotide sequence ID" value="NM_001098550.1"/>
</dbReference>
<dbReference type="SMR" id="A5A6K3"/>
<dbReference type="FunCoup" id="A5A6K3">
    <property type="interactions" value="1380"/>
</dbReference>
<dbReference type="STRING" id="9598.ENSPTRP00000012471"/>
<dbReference type="PaxDb" id="9598-ENSPTRP00000012471"/>
<dbReference type="GeneID" id="453748"/>
<dbReference type="KEGG" id="ptr:453748"/>
<dbReference type="CTD" id="4351"/>
<dbReference type="eggNOG" id="KOG2757">
    <property type="taxonomic scope" value="Eukaryota"/>
</dbReference>
<dbReference type="InParanoid" id="A5A6K3"/>
<dbReference type="OrthoDB" id="1665at9604"/>
<dbReference type="UniPathway" id="UPA00126">
    <property type="reaction ID" value="UER00423"/>
</dbReference>
<dbReference type="Proteomes" id="UP000002277">
    <property type="component" value="Unplaced"/>
</dbReference>
<dbReference type="GO" id="GO:0005829">
    <property type="term" value="C:cytosol"/>
    <property type="evidence" value="ECO:0000318"/>
    <property type="project" value="GO_Central"/>
</dbReference>
<dbReference type="GO" id="GO:0004476">
    <property type="term" value="F:mannose-6-phosphate isomerase activity"/>
    <property type="evidence" value="ECO:0000250"/>
    <property type="project" value="UniProtKB"/>
</dbReference>
<dbReference type="GO" id="GO:0008270">
    <property type="term" value="F:zinc ion binding"/>
    <property type="evidence" value="ECO:0007669"/>
    <property type="project" value="InterPro"/>
</dbReference>
<dbReference type="GO" id="GO:0009298">
    <property type="term" value="P:GDP-mannose biosynthetic process"/>
    <property type="evidence" value="ECO:0000318"/>
    <property type="project" value="GO_Central"/>
</dbReference>
<dbReference type="GO" id="GO:0061611">
    <property type="term" value="P:mannose to fructose-6-phosphate catabolic process"/>
    <property type="evidence" value="ECO:0000250"/>
    <property type="project" value="UniProtKB"/>
</dbReference>
<dbReference type="CDD" id="cd07011">
    <property type="entry name" value="cupin_PMI_type_I_N"/>
    <property type="match status" value="1"/>
</dbReference>
<dbReference type="FunFam" id="1.10.441.10:FF:000001">
    <property type="entry name" value="Mannose-6-phosphate isomerase"/>
    <property type="match status" value="1"/>
</dbReference>
<dbReference type="FunFam" id="2.60.120.10:FF:000044">
    <property type="entry name" value="Mannose-6-phosphate isomerase"/>
    <property type="match status" value="1"/>
</dbReference>
<dbReference type="FunFam" id="2.60.120.10:FF:000060">
    <property type="entry name" value="Putative mannose-6-phosphate isomerase"/>
    <property type="match status" value="1"/>
</dbReference>
<dbReference type="Gene3D" id="2.60.120.10">
    <property type="entry name" value="Jelly Rolls"/>
    <property type="match status" value="2"/>
</dbReference>
<dbReference type="Gene3D" id="1.10.441.10">
    <property type="entry name" value="Phosphomannose Isomerase, domain 2"/>
    <property type="match status" value="1"/>
</dbReference>
<dbReference type="InterPro" id="IPR001250">
    <property type="entry name" value="Man6P_Isoase-1"/>
</dbReference>
<dbReference type="InterPro" id="IPR016305">
    <property type="entry name" value="Mannose-6-P_Isomerase"/>
</dbReference>
<dbReference type="InterPro" id="IPR018050">
    <property type="entry name" value="Pmannose_isomerase-type1_CS"/>
</dbReference>
<dbReference type="InterPro" id="IPR046456">
    <property type="entry name" value="PMI_typeI_C"/>
</dbReference>
<dbReference type="InterPro" id="IPR046457">
    <property type="entry name" value="PMI_typeI_cat"/>
</dbReference>
<dbReference type="InterPro" id="IPR046458">
    <property type="entry name" value="PMI_typeI_hel"/>
</dbReference>
<dbReference type="InterPro" id="IPR014710">
    <property type="entry name" value="RmlC-like_jellyroll"/>
</dbReference>
<dbReference type="InterPro" id="IPR011051">
    <property type="entry name" value="RmlC_Cupin_sf"/>
</dbReference>
<dbReference type="NCBIfam" id="TIGR00218">
    <property type="entry name" value="manA"/>
    <property type="match status" value="1"/>
</dbReference>
<dbReference type="PANTHER" id="PTHR10309">
    <property type="entry name" value="MANNOSE-6-PHOSPHATE ISOMERASE"/>
    <property type="match status" value="1"/>
</dbReference>
<dbReference type="PANTHER" id="PTHR10309:SF0">
    <property type="entry name" value="MANNOSE-6-PHOSPHATE ISOMERASE"/>
    <property type="match status" value="1"/>
</dbReference>
<dbReference type="Pfam" id="PF01238">
    <property type="entry name" value="PMI_typeI_C"/>
    <property type="match status" value="1"/>
</dbReference>
<dbReference type="Pfam" id="PF20511">
    <property type="entry name" value="PMI_typeI_cat"/>
    <property type="match status" value="1"/>
</dbReference>
<dbReference type="Pfam" id="PF20512">
    <property type="entry name" value="PMI_typeI_hel"/>
    <property type="match status" value="1"/>
</dbReference>
<dbReference type="PIRSF" id="PIRSF001480">
    <property type="entry name" value="Mannose-6-phosphate_isomerase"/>
    <property type="match status" value="1"/>
</dbReference>
<dbReference type="PRINTS" id="PR00714">
    <property type="entry name" value="MAN6PISMRASE"/>
</dbReference>
<dbReference type="SUPFAM" id="SSF51182">
    <property type="entry name" value="RmlC-like cupins"/>
    <property type="match status" value="1"/>
</dbReference>
<dbReference type="PROSITE" id="PS00965">
    <property type="entry name" value="PMI_I_1"/>
    <property type="match status" value="1"/>
</dbReference>
<dbReference type="PROSITE" id="PS00966">
    <property type="entry name" value="PMI_I_2"/>
    <property type="match status" value="1"/>
</dbReference>
<name>MPI_PANTR</name>
<evidence type="ECO:0000250" key="1"/>
<evidence type="ECO:0000250" key="2">
    <source>
        <dbReference type="UniProtKB" id="P34948"/>
    </source>
</evidence>
<evidence type="ECO:0000250" key="3">
    <source>
        <dbReference type="UniProtKB" id="P34949"/>
    </source>
</evidence>
<evidence type="ECO:0000250" key="4">
    <source>
        <dbReference type="UniProtKB" id="Q924M7"/>
    </source>
</evidence>
<evidence type="ECO:0000305" key="5"/>
<comment type="function">
    <text evidence="3">Isomerase that catalyzes the interconversion of fructose-6-P and mannose-6-P and has a critical role in the supply of D-mannose derivatives required for many eukaryotic glycosylation reactions.</text>
</comment>
<comment type="catalytic activity">
    <reaction evidence="3">
        <text>D-mannose 6-phosphate = D-fructose 6-phosphate</text>
        <dbReference type="Rhea" id="RHEA:12356"/>
        <dbReference type="ChEBI" id="CHEBI:58735"/>
        <dbReference type="ChEBI" id="CHEBI:61527"/>
        <dbReference type="EC" id="5.3.1.8"/>
    </reaction>
</comment>
<comment type="cofactor">
    <cofactor evidence="2">
        <name>Zn(2+)</name>
        <dbReference type="ChEBI" id="CHEBI:29105"/>
    </cofactor>
    <text evidence="2">Binds 1 zinc ion per subunit.</text>
</comment>
<comment type="pathway">
    <text>Nucleotide-sugar biosynthesis; GDP-alpha-D-mannose biosynthesis; alpha-D-mannose 1-phosphate from D-fructose 6-phosphate: step 1/2.</text>
</comment>
<comment type="subcellular location">
    <subcellularLocation>
        <location evidence="4">Cytoplasm</location>
    </subcellularLocation>
</comment>
<comment type="similarity">
    <text evidence="5">Belongs to the mannose-6-phosphate isomerase type 1 family.</text>
</comment>